<comment type="function">
    <text evidence="9">Kelch-like protein; part of the gene cluster that mediates the biosynthesis of terrein, a fungal metabolite with ecological, antimicrobial, antiproliferative, and antioxidative activities (PubMed:24816227). The first step in the pathway is performed by the polyketide synthase terA that produces 4-hydroxy-6-methylpyranon (4-HMP), orsellinic acid (OA), and 2,3-dehydro-6-hydroxymellein (2,3-dehydro-6-HM) by condensing acetyl-CoA with two, three, or four malonyl-CoA units, respectively (PubMed:24816227). 4-HMP and OA are not pathway intermediates, but are rather shunt or side products (PubMed:24816227). 2,3-dehydro-6-HM is further converted to 6-hydroxymellein (6-HM) by the 6-hydroxymellein synthase terB (PubMed:24816227). The monooxygenases terC and terD, the multicopper oxidase terE and the Kelch-like protein terF are then involved in the transformation of 6-HM to terrein (PubMed:24816227). Even if they are co-regulated with the other terrein cluster genes, terH and terI seem to be dispensable for terrein production; whereas one or both of the 2 transporters terG and terJ are probably required for efficient secretion of metabolites (PubMed:24816227).</text>
</comment>
<comment type="pathway">
    <text evidence="9">Secondary metabolite biosynthesis.</text>
</comment>
<comment type="induction">
    <text evidence="12">Expression is under the control of the terrein cluster-specific transcription factor terR (PubMed:25852654).</text>
</comment>
<comment type="disruption phenotype">
    <text evidence="9">Impairs the production of terrein (PubMed:24816227).</text>
</comment>
<comment type="biotechnology">
    <text evidence="2 3 4 5 6 7 8 10 11 13 14">Terrein shows anticancer activity on various tumors including cervical carcinoma, ovarian cancer, and head and neck cancer (PubMed:23417151, PubMed:25318762, PubMed:25592371, PubMed:27127118). The secondary metabolite acts as angiogenesis inhibitors through the inhibition of angiogenin secretion (PubMed:18776656, PubMed:27127118). Terrein also has anti-inflammatory activity (PubMed:18358890). It shows an alleviative function of age-related inflammation characterized as an anti-oxidant and might therefore be a useful nutraceutical compound for anti-aging (PubMed:26416516). Terrein may enhance osseointegration by decreasing the level of ROS and has a potentially synergistic effect on osteoblast differentiation (PubMed:21104936). Terrein has also been shown to act as a melanogenesis inhibitor (PubMed:15558216, PubMed:15603975, PubMed:19493001).</text>
</comment>
<organism>
    <name type="scientific">Aspergillus terreus (strain NIH 2624 / FGSC A1156)</name>
    <dbReference type="NCBI Taxonomy" id="341663"/>
    <lineage>
        <taxon>Eukaryota</taxon>
        <taxon>Fungi</taxon>
        <taxon>Dikarya</taxon>
        <taxon>Ascomycota</taxon>
        <taxon>Pezizomycotina</taxon>
        <taxon>Eurotiomycetes</taxon>
        <taxon>Eurotiomycetidae</taxon>
        <taxon>Eurotiales</taxon>
        <taxon>Aspergillaceae</taxon>
        <taxon>Aspergillus</taxon>
        <taxon>Aspergillus subgen. Circumdati</taxon>
    </lineage>
</organism>
<accession>Q0D1P4</accession>
<name>TERF_ASPTN</name>
<gene>
    <name evidence="15" type="primary">terF</name>
    <name type="ORF">ATEG_00140</name>
</gene>
<reference key="1">
    <citation type="submission" date="2005-09" db="EMBL/GenBank/DDBJ databases">
        <title>Annotation of the Aspergillus terreus NIH2624 genome.</title>
        <authorList>
            <person name="Birren B.W."/>
            <person name="Lander E.S."/>
            <person name="Galagan J.E."/>
            <person name="Nusbaum C."/>
            <person name="Devon K."/>
            <person name="Henn M."/>
            <person name="Ma L.-J."/>
            <person name="Jaffe D.B."/>
            <person name="Butler J."/>
            <person name="Alvarez P."/>
            <person name="Gnerre S."/>
            <person name="Grabherr M."/>
            <person name="Kleber M."/>
            <person name="Mauceli E.W."/>
            <person name="Brockman W."/>
            <person name="Rounsley S."/>
            <person name="Young S.K."/>
            <person name="LaButti K."/>
            <person name="Pushparaj V."/>
            <person name="DeCaprio D."/>
            <person name="Crawford M."/>
            <person name="Koehrsen M."/>
            <person name="Engels R."/>
            <person name="Montgomery P."/>
            <person name="Pearson M."/>
            <person name="Howarth C."/>
            <person name="Larson L."/>
            <person name="Luoma S."/>
            <person name="White J."/>
            <person name="Alvarado L."/>
            <person name="Kodira C.D."/>
            <person name="Zeng Q."/>
            <person name="Oleary S."/>
            <person name="Yandava C."/>
            <person name="Denning D.W."/>
            <person name="Nierman W.C."/>
            <person name="Milne T."/>
            <person name="Madden K."/>
        </authorList>
    </citation>
    <scope>NUCLEOTIDE SEQUENCE [LARGE SCALE GENOMIC DNA]</scope>
    <source>
        <strain>NIH 2624 / FGSC A1156</strain>
    </source>
</reference>
<reference key="2">
    <citation type="journal article" date="2004" name="Cell. Mol. Life Sci.">
        <title>Terrein: a new melanogenesis inhibitor and its mechanism.</title>
        <authorList>
            <person name="Park S.H."/>
            <person name="Kim D.S."/>
            <person name="Kim W.G."/>
            <person name="Ryoo I.J."/>
            <person name="Lee D.H."/>
            <person name="Huh C.H."/>
            <person name="Youn S.W."/>
            <person name="Yoo I.D."/>
            <person name="Park K.C."/>
        </authorList>
    </citation>
    <scope>BIOTECHNOLOGY</scope>
</reference>
<reference key="3">
    <citation type="journal article" date="2005" name="Bioorg. Med. Chem. Lett.">
        <title>Synthesis and melanin biosynthesis inhibitory activity of (+/-)-terrein produced by Penicillium sp. 20135.</title>
        <authorList>
            <person name="Lee S."/>
            <person name="Kim W.G."/>
            <person name="Kim E."/>
            <person name="Ryoo I.J."/>
            <person name="Lee H.K."/>
            <person name="Kim J.N."/>
            <person name="Jung S.H."/>
            <person name="Yoo I.D."/>
        </authorList>
    </citation>
    <scope>BIOTECHNOLOGY</scope>
</reference>
<reference key="4">
    <citation type="journal article" date="2008" name="J. Antibiot.">
        <title>A new terrein glucoside, a novel inhibitor of angiogenin secretion in tumor angiogenesis.</title>
        <authorList>
            <person name="Arakawa M."/>
            <person name="Someno T."/>
            <person name="Kawada M."/>
            <person name="Ikeda D."/>
        </authorList>
    </citation>
    <scope>BIOTECHNOLOGY</scope>
</reference>
<reference key="5">
    <citation type="journal article" date="2008" name="J. Endod.">
        <title>Terrein reduces pulpal inflammation in human dental pulp cells.</title>
        <authorList>
            <person name="Lee J.C."/>
            <person name="Yu M.K."/>
            <person name="Lee R."/>
            <person name="Lee Y.H."/>
            <person name="Jeon J.G."/>
            <person name="Lee M.H."/>
            <person name="Jhee E.C."/>
            <person name="Yoo I.D."/>
            <person name="Yi H.K."/>
        </authorList>
    </citation>
    <scope>BIOTECHNOLOGY</scope>
</reference>
<reference key="6">
    <citation type="journal article" date="2009" name="Exp. Dermatol.">
        <title>Long-term suppression of tyrosinase by terrein via tyrosinase degradation and its decreased expression.</title>
        <authorList>
            <person name="Park S.H."/>
            <person name="Kim D.S."/>
            <person name="Lee H.K."/>
            <person name="Kwon S.B."/>
            <person name="Lee S."/>
            <person name="Ryoo I.J."/>
            <person name="Kim W.G."/>
            <person name="Yoo I.D."/>
            <person name="Park K.C."/>
        </authorList>
    </citation>
    <scope>BIOTECHNOLOGY</scope>
</reference>
<reference key="7">
    <citation type="journal article" date="2010" name="Cell Biochem. Funct.">
        <title>Enhancement of osteoblast biocompatibility on titanium surface with Terrein treatment.</title>
        <authorList>
            <person name="Lee Y.H."/>
            <person name="Lee N.H."/>
            <person name="Bhattarai G."/>
            <person name="Oh Y.T."/>
            <person name="Yu M.K."/>
            <person name="Yoo I.D."/>
            <person name="Jhee E.C."/>
            <person name="Yi H.K."/>
        </authorList>
    </citation>
    <scope>BIOTECHNOLOGY</scope>
</reference>
<reference key="8">
    <citation type="journal article" date="2013" name="Oncol. Rep.">
        <title>Terrein induces apoptosis in HeLa human cervical carcinoma cells through p53 and ERK regulation.</title>
        <authorList>
            <person name="Porameesanaporn Y."/>
            <person name="Uthaisang-Tanechpongtamb W."/>
            <person name="Jarintanan F."/>
            <person name="Jongrungruangchok S."/>
            <person name="Thanomsub Wongsatayanon B."/>
        </authorList>
    </citation>
    <scope>BIOTECHNOLOGY</scope>
</reference>
<reference key="9">
    <citation type="journal article" date="2014" name="Chem. Biol.">
        <title>Terrein biosynthesis in Aspergillus terreus and its impact on phytotoxicity.</title>
        <authorList>
            <person name="Zaehle C."/>
            <person name="Gressler M."/>
            <person name="Shelest E."/>
            <person name="Geib E."/>
            <person name="Hertweck C."/>
            <person name="Brock M."/>
        </authorList>
    </citation>
    <scope>FUNCTION</scope>
    <scope>DISRUPTION PHENOTYPE</scope>
</reference>
<reference key="10">
    <citation type="journal article" date="2014" name="Int. J. Mol. Med.">
        <title>The marine-derived fungal metabolite, terrein, inhibits cell proliferation and induces cell cycle arrest in human ovarian cancer cells.</title>
        <authorList>
            <person name="Chen Y.F."/>
            <person name="Wang S.Y."/>
            <person name="Shen H."/>
            <person name="Yao X.F."/>
            <person name="Zhang F.L."/>
            <person name="Lai D."/>
        </authorList>
    </citation>
    <scope>BIOTECHNOLOGY</scope>
</reference>
<reference key="11">
    <citation type="journal article" date="2015" name="Cell Biochem. Funct.">
        <title>Terrein reduces age-related inflammation induced by oxidative stress through Nrf2/ERK1/2/HO-1 signalling in aged HDF cells.</title>
        <authorList>
            <person name="Lee Y.H."/>
            <person name="Lee S.J."/>
            <person name="Jung J.E."/>
            <person name="Kim J.S."/>
            <person name="Lee N.H."/>
            <person name="Yi H.K."/>
        </authorList>
    </citation>
    <scope>BIOTECHNOLOGY</scope>
</reference>
<reference key="12">
    <citation type="journal article" date="2015" name="Front. Microbiol.">
        <title>A new high-performance heterologous fungal expression system based on regulatory elements from the Aspergillus terreus terrein gene cluster.</title>
        <authorList>
            <person name="Gressler M."/>
            <person name="Hortschansky P."/>
            <person name="Geib E."/>
            <person name="Brock M."/>
        </authorList>
    </citation>
    <scope>INDUCTION</scope>
</reference>
<reference key="13">
    <citation type="journal article" date="2015" name="Oncol. Rep.">
        <title>(+)-Terrein inhibits human hepatoma Bel-7402 proliferation through cell cycle arrest.</title>
        <authorList>
            <person name="Zhang F."/>
            <person name="Mijiti M."/>
            <person name="Ding W."/>
            <person name="Song J."/>
            <person name="Yin Y."/>
            <person name="Sun W."/>
            <person name="Li Z."/>
        </authorList>
    </citation>
    <scope>BIOTECHNOLOGY</scope>
</reference>
<reference key="14">
    <citation type="journal article" date="2016" name="Anticancer Res.">
        <title>Synthetic terrein inhibits progression of head and neck cancer by suppressing angiogenin production.</title>
        <authorList>
            <person name="Shibata A."/>
            <person name="Ibaragi S."/>
            <person name="Mandai H."/>
            <person name="Tsumura T."/>
            <person name="Kishimoto K."/>
            <person name="Okui T."/>
            <person name="Hassan N.M."/>
            <person name="Shimo T."/>
            <person name="Omori K."/>
            <person name="Hu G.F."/>
            <person name="Takashiba S."/>
            <person name="Suga S."/>
            <person name="Sasaki A."/>
        </authorList>
    </citation>
    <scope>BIOTECHNOLOGY</scope>
</reference>
<protein>
    <recommendedName>
        <fullName evidence="16">Kelch-like protein terF</fullName>
    </recommendedName>
    <alternativeName>
        <fullName evidence="15">Terrein biosynthesis cluster protein terF</fullName>
    </alternativeName>
</protein>
<sequence>MPPTISDDTTVRSFTCAQPLGRAGYELIIRQMLHRFLSDLHTTKALLDRSLQATVNHAAGPVRSLLTIITVGFYTLLNWCSLGSYHTTKMISTVVTGLLLLASGCEALPTNQTPLPGKWSTLPNITLNGVEYPRQEHAAALVGDEIFVLGGILPWDGKEYATTNIVQKYNMITGTWTETAPMPAALNHANVAVVDGKIYYLGGLEAVDETYWNATGKSAVYDPATDEWTVLPSMPEGREIGSAATVVVDDTIYLPGGLAYTNITYDQEGTVSRFSSYNVRTQEWTTLPDLPAPRDHAGKGIYRDMLYILGGREFGNKNVVSTVFGFNLTSQQWATAFEPMPIARGGVASATIGSLIFTAGGEGDRRTPTAVFPEMQAYDAATNTWVDYADMPLPVHGSDAVVYKGEIVIPGGGIVTGATLTPVVQTFQPPLPDSGEKSMPLMVMVYRVVFDLPWMLFKR</sequence>
<keyword id="KW-0880">Kelch repeat</keyword>
<keyword id="KW-1185">Reference proteome</keyword>
<keyword id="KW-0677">Repeat</keyword>
<dbReference type="EMBL" id="CH476594">
    <property type="protein sequence ID" value="EAU38786.1"/>
    <property type="molecule type" value="Genomic_DNA"/>
</dbReference>
<dbReference type="RefSeq" id="XP_001210226.1">
    <property type="nucleotide sequence ID" value="XM_001210226.1"/>
</dbReference>
<dbReference type="SMR" id="Q0D1P4"/>
<dbReference type="STRING" id="341663.Q0D1P4"/>
<dbReference type="EnsemblFungi" id="EAU38786">
    <property type="protein sequence ID" value="EAU38786"/>
    <property type="gene ID" value="ATEG_00140"/>
</dbReference>
<dbReference type="GeneID" id="4354897"/>
<dbReference type="VEuPathDB" id="FungiDB:ATEG_00140"/>
<dbReference type="eggNOG" id="KOG4441">
    <property type="taxonomic scope" value="Eukaryota"/>
</dbReference>
<dbReference type="HOGENOM" id="CLU_004253_10_0_1"/>
<dbReference type="OMA" id="HGEMIYL"/>
<dbReference type="OrthoDB" id="45365at2759"/>
<dbReference type="Proteomes" id="UP000007963">
    <property type="component" value="Unassembled WGS sequence"/>
</dbReference>
<dbReference type="Gene3D" id="2.120.10.80">
    <property type="entry name" value="Kelch-type beta propeller"/>
    <property type="match status" value="2"/>
</dbReference>
<dbReference type="InterPro" id="IPR056737">
    <property type="entry name" value="Beta-prop_ATRN-MKLN-like"/>
</dbReference>
<dbReference type="InterPro" id="IPR015915">
    <property type="entry name" value="Kelch-typ_b-propeller"/>
</dbReference>
<dbReference type="InterPro" id="IPR006652">
    <property type="entry name" value="Kelch_1"/>
</dbReference>
<dbReference type="PANTHER" id="PTHR46344:SF27">
    <property type="entry name" value="KELCH REPEAT SUPERFAMILY PROTEIN"/>
    <property type="match status" value="1"/>
</dbReference>
<dbReference type="PANTHER" id="PTHR46344">
    <property type="entry name" value="OS02G0202900 PROTEIN"/>
    <property type="match status" value="1"/>
</dbReference>
<dbReference type="Pfam" id="PF24981">
    <property type="entry name" value="Beta-prop_ATRN-LZTR1"/>
    <property type="match status" value="1"/>
</dbReference>
<dbReference type="SMART" id="SM00612">
    <property type="entry name" value="Kelch"/>
    <property type="match status" value="5"/>
</dbReference>
<dbReference type="SUPFAM" id="SSF117281">
    <property type="entry name" value="Kelch motif"/>
    <property type="match status" value="2"/>
</dbReference>
<evidence type="ECO:0000255" key="1"/>
<evidence type="ECO:0000269" key="2">
    <source>
    </source>
</evidence>
<evidence type="ECO:0000269" key="3">
    <source>
    </source>
</evidence>
<evidence type="ECO:0000269" key="4">
    <source>
    </source>
</evidence>
<evidence type="ECO:0000269" key="5">
    <source>
    </source>
</evidence>
<evidence type="ECO:0000269" key="6">
    <source>
    </source>
</evidence>
<evidence type="ECO:0000269" key="7">
    <source>
    </source>
</evidence>
<evidence type="ECO:0000269" key="8">
    <source>
    </source>
</evidence>
<evidence type="ECO:0000269" key="9">
    <source>
    </source>
</evidence>
<evidence type="ECO:0000269" key="10">
    <source>
    </source>
</evidence>
<evidence type="ECO:0000269" key="11">
    <source>
    </source>
</evidence>
<evidence type="ECO:0000269" key="12">
    <source>
    </source>
</evidence>
<evidence type="ECO:0000269" key="13">
    <source>
    </source>
</evidence>
<evidence type="ECO:0000269" key="14">
    <source>
    </source>
</evidence>
<evidence type="ECO:0000303" key="15">
    <source>
    </source>
</evidence>
<evidence type="ECO:0000305" key="16">
    <source>
    </source>
</evidence>
<feature type="chain" id="PRO_0000437629" description="Kelch-like protein terF">
    <location>
        <begin position="1"/>
        <end position="459"/>
    </location>
</feature>
<feature type="repeat" description="Kelch 1" evidence="1">
    <location>
        <begin position="92"/>
        <end position="144"/>
    </location>
</feature>
<feature type="repeat" description="Kelch 2" evidence="1">
    <location>
        <begin position="145"/>
        <end position="196"/>
    </location>
</feature>
<feature type="repeat" description="Kelch 3" evidence="1">
    <location>
        <begin position="198"/>
        <end position="248"/>
    </location>
</feature>
<feature type="repeat" description="Kelch 4" evidence="1">
    <location>
        <begin position="251"/>
        <end position="304"/>
    </location>
</feature>
<feature type="repeat" description="Kelch 5" evidence="1">
    <location>
        <begin position="306"/>
        <end position="354"/>
    </location>
</feature>
<feature type="repeat" description="Kelch 6" evidence="1">
    <location>
        <begin position="355"/>
        <end position="405"/>
    </location>
</feature>
<proteinExistence type="evidence at protein level"/>